<accession>A9VWV3</accession>
<organism>
    <name type="scientific">Methylorubrum extorquens (strain PA1)</name>
    <name type="common">Methylobacterium extorquens</name>
    <dbReference type="NCBI Taxonomy" id="419610"/>
    <lineage>
        <taxon>Bacteria</taxon>
        <taxon>Pseudomonadati</taxon>
        <taxon>Pseudomonadota</taxon>
        <taxon>Alphaproteobacteria</taxon>
        <taxon>Hyphomicrobiales</taxon>
        <taxon>Methylobacteriaceae</taxon>
        <taxon>Methylorubrum</taxon>
    </lineage>
</organism>
<proteinExistence type="inferred from homology"/>
<gene>
    <name evidence="1" type="primary">murG</name>
    <name type="ordered locus">Mext_2941</name>
</gene>
<reference key="1">
    <citation type="submission" date="2007-12" db="EMBL/GenBank/DDBJ databases">
        <title>Complete sequence of Methylobacterium extorquens PA1.</title>
        <authorList>
            <consortium name="US DOE Joint Genome Institute"/>
            <person name="Copeland A."/>
            <person name="Lucas S."/>
            <person name="Lapidus A."/>
            <person name="Barry K."/>
            <person name="Glavina del Rio T."/>
            <person name="Dalin E."/>
            <person name="Tice H."/>
            <person name="Pitluck S."/>
            <person name="Saunders E."/>
            <person name="Brettin T."/>
            <person name="Bruce D."/>
            <person name="Detter J.C."/>
            <person name="Han C."/>
            <person name="Schmutz J."/>
            <person name="Larimer F."/>
            <person name="Land M."/>
            <person name="Hauser L."/>
            <person name="Kyrpides N."/>
            <person name="Kim E."/>
            <person name="Marx C."/>
            <person name="Richardson P."/>
        </authorList>
    </citation>
    <scope>NUCLEOTIDE SEQUENCE [LARGE SCALE GENOMIC DNA]</scope>
    <source>
        <strain>PA1</strain>
    </source>
</reference>
<dbReference type="EC" id="2.4.1.227" evidence="1"/>
<dbReference type="EMBL" id="CP000908">
    <property type="protein sequence ID" value="ABY31330.1"/>
    <property type="molecule type" value="Genomic_DNA"/>
</dbReference>
<dbReference type="RefSeq" id="WP_012254272.1">
    <property type="nucleotide sequence ID" value="NC_010172.1"/>
</dbReference>
<dbReference type="SMR" id="A9VWV3"/>
<dbReference type="CAZy" id="GT28">
    <property type="family name" value="Glycosyltransferase Family 28"/>
</dbReference>
<dbReference type="KEGG" id="mex:Mext_2941"/>
<dbReference type="eggNOG" id="COG0707">
    <property type="taxonomic scope" value="Bacteria"/>
</dbReference>
<dbReference type="HOGENOM" id="CLU_037404_2_1_5"/>
<dbReference type="BioCyc" id="MEXT419610:MEXT_RS14815-MONOMER"/>
<dbReference type="UniPathway" id="UPA00219"/>
<dbReference type="GO" id="GO:0005886">
    <property type="term" value="C:plasma membrane"/>
    <property type="evidence" value="ECO:0007669"/>
    <property type="project" value="UniProtKB-SubCell"/>
</dbReference>
<dbReference type="GO" id="GO:0051991">
    <property type="term" value="F:UDP-N-acetyl-D-glucosamine:N-acetylmuramoyl-L-alanyl-D-glutamyl-meso-2,6-diaminopimelyl-D-alanyl-D-alanine-diphosphoundecaprenol 4-beta-N-acetylglucosaminlytransferase activity"/>
    <property type="evidence" value="ECO:0007669"/>
    <property type="project" value="RHEA"/>
</dbReference>
<dbReference type="GO" id="GO:0050511">
    <property type="term" value="F:undecaprenyldiphospho-muramoylpentapeptide beta-N-acetylglucosaminyltransferase activity"/>
    <property type="evidence" value="ECO:0007669"/>
    <property type="project" value="UniProtKB-UniRule"/>
</dbReference>
<dbReference type="GO" id="GO:0005975">
    <property type="term" value="P:carbohydrate metabolic process"/>
    <property type="evidence" value="ECO:0007669"/>
    <property type="project" value="InterPro"/>
</dbReference>
<dbReference type="GO" id="GO:0051301">
    <property type="term" value="P:cell division"/>
    <property type="evidence" value="ECO:0007669"/>
    <property type="project" value="UniProtKB-KW"/>
</dbReference>
<dbReference type="GO" id="GO:0071555">
    <property type="term" value="P:cell wall organization"/>
    <property type="evidence" value="ECO:0007669"/>
    <property type="project" value="UniProtKB-KW"/>
</dbReference>
<dbReference type="GO" id="GO:0030259">
    <property type="term" value="P:lipid glycosylation"/>
    <property type="evidence" value="ECO:0007669"/>
    <property type="project" value="UniProtKB-UniRule"/>
</dbReference>
<dbReference type="GO" id="GO:0009252">
    <property type="term" value="P:peptidoglycan biosynthetic process"/>
    <property type="evidence" value="ECO:0007669"/>
    <property type="project" value="UniProtKB-UniRule"/>
</dbReference>
<dbReference type="GO" id="GO:0008360">
    <property type="term" value="P:regulation of cell shape"/>
    <property type="evidence" value="ECO:0007669"/>
    <property type="project" value="UniProtKB-KW"/>
</dbReference>
<dbReference type="CDD" id="cd03785">
    <property type="entry name" value="GT28_MurG"/>
    <property type="match status" value="1"/>
</dbReference>
<dbReference type="Gene3D" id="3.40.50.2000">
    <property type="entry name" value="Glycogen Phosphorylase B"/>
    <property type="match status" value="2"/>
</dbReference>
<dbReference type="HAMAP" id="MF_00033">
    <property type="entry name" value="MurG"/>
    <property type="match status" value="1"/>
</dbReference>
<dbReference type="InterPro" id="IPR006009">
    <property type="entry name" value="GlcNAc_MurG"/>
</dbReference>
<dbReference type="InterPro" id="IPR007235">
    <property type="entry name" value="Glyco_trans_28_C"/>
</dbReference>
<dbReference type="InterPro" id="IPR004276">
    <property type="entry name" value="GlycoTrans_28_N"/>
</dbReference>
<dbReference type="NCBIfam" id="TIGR01133">
    <property type="entry name" value="murG"/>
    <property type="match status" value="1"/>
</dbReference>
<dbReference type="PANTHER" id="PTHR21015:SF22">
    <property type="entry name" value="GLYCOSYLTRANSFERASE"/>
    <property type="match status" value="1"/>
</dbReference>
<dbReference type="PANTHER" id="PTHR21015">
    <property type="entry name" value="UDP-N-ACETYLGLUCOSAMINE--N-ACETYLMURAMYL-(PENTAPEPTIDE) PYROPHOSPHORYL-UNDECAPRENOL N-ACETYLGLUCOSAMINE TRANSFERASE 1"/>
    <property type="match status" value="1"/>
</dbReference>
<dbReference type="Pfam" id="PF04101">
    <property type="entry name" value="Glyco_tran_28_C"/>
    <property type="match status" value="1"/>
</dbReference>
<dbReference type="Pfam" id="PF03033">
    <property type="entry name" value="Glyco_transf_28"/>
    <property type="match status" value="1"/>
</dbReference>
<dbReference type="SUPFAM" id="SSF53756">
    <property type="entry name" value="UDP-Glycosyltransferase/glycogen phosphorylase"/>
    <property type="match status" value="1"/>
</dbReference>
<protein>
    <recommendedName>
        <fullName evidence="1">UDP-N-acetylglucosamine--N-acetylmuramyl-(pentapeptide) pyrophosphoryl-undecaprenol N-acetylglucosamine transferase</fullName>
        <ecNumber evidence="1">2.4.1.227</ecNumber>
    </recommendedName>
    <alternativeName>
        <fullName evidence="1">Undecaprenyl-PP-MurNAc-pentapeptide-UDPGlcNAc GlcNAc transferase</fullName>
    </alternativeName>
</protein>
<name>MURG_METEP</name>
<comment type="function">
    <text evidence="1">Cell wall formation. Catalyzes the transfer of a GlcNAc subunit on undecaprenyl-pyrophosphoryl-MurNAc-pentapeptide (lipid intermediate I) to form undecaprenyl-pyrophosphoryl-MurNAc-(pentapeptide)GlcNAc (lipid intermediate II).</text>
</comment>
<comment type="catalytic activity">
    <reaction evidence="1">
        <text>di-trans,octa-cis-undecaprenyl diphospho-N-acetyl-alpha-D-muramoyl-L-alanyl-D-glutamyl-meso-2,6-diaminopimeloyl-D-alanyl-D-alanine + UDP-N-acetyl-alpha-D-glucosamine = di-trans,octa-cis-undecaprenyl diphospho-[N-acetyl-alpha-D-glucosaminyl-(1-&gt;4)]-N-acetyl-alpha-D-muramoyl-L-alanyl-D-glutamyl-meso-2,6-diaminopimeloyl-D-alanyl-D-alanine + UDP + H(+)</text>
        <dbReference type="Rhea" id="RHEA:31227"/>
        <dbReference type="ChEBI" id="CHEBI:15378"/>
        <dbReference type="ChEBI" id="CHEBI:57705"/>
        <dbReference type="ChEBI" id="CHEBI:58223"/>
        <dbReference type="ChEBI" id="CHEBI:61387"/>
        <dbReference type="ChEBI" id="CHEBI:61388"/>
        <dbReference type="EC" id="2.4.1.227"/>
    </reaction>
</comment>
<comment type="pathway">
    <text evidence="1">Cell wall biogenesis; peptidoglycan biosynthesis.</text>
</comment>
<comment type="subcellular location">
    <subcellularLocation>
        <location evidence="1">Cell inner membrane</location>
        <topology evidence="1">Peripheral membrane protein</topology>
        <orientation evidence="1">Cytoplasmic side</orientation>
    </subcellularLocation>
</comment>
<comment type="similarity">
    <text evidence="1">Belongs to the glycosyltransferase 28 family. MurG subfamily.</text>
</comment>
<sequence length="369" mass="38090">MTVFTPLVLVCAGGTGGHLFPAQSLAYALKDRGIRVALATDARVDSIAGDFPAEEIVTIASATPSGRSVLRRAGAVVTLGRGFGQAARAVRRLNPAAVVGFGGYPTVPPMLAAQLLRVPTILHEQNAVMGRANGFLAKGARVIATGFKEVRGVPEKATARRVHTGNPIRPAVLAVAETPYPSLDAEAPLRLLVFGGSQGARVMSEVVPAAIEKLPQDLRARLHLVQQARPEDLTATQNRYLAMGLGGIEAAPFFKDLPGRMASAHLVVARSGASTVSELAAIGRPAILVPLPGALDQDQAANAATLAQIGAALSIPQSAFTPDRLAAELVDLFEAPRKLTQAAAAAKTACILDAADRLAALVAETAAAT</sequence>
<keyword id="KW-0131">Cell cycle</keyword>
<keyword id="KW-0132">Cell division</keyword>
<keyword id="KW-0997">Cell inner membrane</keyword>
<keyword id="KW-1003">Cell membrane</keyword>
<keyword id="KW-0133">Cell shape</keyword>
<keyword id="KW-0961">Cell wall biogenesis/degradation</keyword>
<keyword id="KW-0328">Glycosyltransferase</keyword>
<keyword id="KW-0472">Membrane</keyword>
<keyword id="KW-0573">Peptidoglycan synthesis</keyword>
<keyword id="KW-0808">Transferase</keyword>
<evidence type="ECO:0000255" key="1">
    <source>
        <dbReference type="HAMAP-Rule" id="MF_00033"/>
    </source>
</evidence>
<feature type="chain" id="PRO_1000090446" description="UDP-N-acetylglucosamine--N-acetylmuramyl-(pentapeptide) pyrophosphoryl-undecaprenol N-acetylglucosamine transferase">
    <location>
        <begin position="1"/>
        <end position="369"/>
    </location>
</feature>
<feature type="binding site" evidence="1">
    <location>
        <begin position="15"/>
        <end position="17"/>
    </location>
    <ligand>
        <name>UDP-N-acetyl-alpha-D-glucosamine</name>
        <dbReference type="ChEBI" id="CHEBI:57705"/>
    </ligand>
</feature>
<feature type="binding site" evidence="1">
    <location>
        <position position="126"/>
    </location>
    <ligand>
        <name>UDP-N-acetyl-alpha-D-glucosamine</name>
        <dbReference type="ChEBI" id="CHEBI:57705"/>
    </ligand>
</feature>
<feature type="binding site" evidence="1">
    <location>
        <position position="169"/>
    </location>
    <ligand>
        <name>UDP-N-acetyl-alpha-D-glucosamine</name>
        <dbReference type="ChEBI" id="CHEBI:57705"/>
    </ligand>
</feature>
<feature type="binding site" evidence="1">
    <location>
        <position position="197"/>
    </location>
    <ligand>
        <name>UDP-N-acetyl-alpha-D-glucosamine</name>
        <dbReference type="ChEBI" id="CHEBI:57705"/>
    </ligand>
</feature>
<feature type="binding site" evidence="1">
    <location>
        <position position="299"/>
    </location>
    <ligand>
        <name>UDP-N-acetyl-alpha-D-glucosamine</name>
        <dbReference type="ChEBI" id="CHEBI:57705"/>
    </ligand>
</feature>